<organism>
    <name type="scientific">Eulemur macaco macaco</name>
    <name type="common">Black lemur</name>
    <dbReference type="NCBI Taxonomy" id="30603"/>
    <lineage>
        <taxon>Eukaryota</taxon>
        <taxon>Metazoa</taxon>
        <taxon>Chordata</taxon>
        <taxon>Craniata</taxon>
        <taxon>Vertebrata</taxon>
        <taxon>Euteleostomi</taxon>
        <taxon>Mammalia</taxon>
        <taxon>Eutheria</taxon>
        <taxon>Euarchontoglires</taxon>
        <taxon>Primates</taxon>
        <taxon>Strepsirrhini</taxon>
        <taxon>Lemuriformes</taxon>
        <taxon>Lemuridae</taxon>
        <taxon>Eulemur</taxon>
    </lineage>
</organism>
<protein>
    <recommendedName>
        <fullName>Caveolin-2</fullName>
    </recommendedName>
</protein>
<evidence type="ECO:0000250" key="1"/>
<evidence type="ECO:0000250" key="2">
    <source>
        <dbReference type="UniProtKB" id="P51636"/>
    </source>
</evidence>
<evidence type="ECO:0000250" key="3">
    <source>
        <dbReference type="UniProtKB" id="Q9WVC3"/>
    </source>
</evidence>
<evidence type="ECO:0000255" key="4"/>
<evidence type="ECO:0000305" key="5"/>
<reference key="1">
    <citation type="submission" date="2005-11" db="EMBL/GenBank/DDBJ databases">
        <title>NISC comparative sequencing initiative.</title>
        <authorList>
            <person name="Antonellis A."/>
            <person name="Ayele K."/>
            <person name="Benjamin B."/>
            <person name="Blakesley R.W."/>
            <person name="Boakye A."/>
            <person name="Bouffard G.G."/>
            <person name="Brinkley C."/>
            <person name="Brooks S."/>
            <person name="Chu G."/>
            <person name="Coleman H."/>
            <person name="Engle J."/>
            <person name="Gestole M."/>
            <person name="Greene A."/>
            <person name="Guan X."/>
            <person name="Gupta J."/>
            <person name="Haghighi P."/>
            <person name="Han J."/>
            <person name="Hansen N."/>
            <person name="Ho S.-L."/>
            <person name="Hu P."/>
            <person name="Hunter G."/>
            <person name="Hurle B."/>
            <person name="Idol J.R."/>
            <person name="Kwong P."/>
            <person name="Laric P."/>
            <person name="Larson S."/>
            <person name="Lee-Lin S.-Q."/>
            <person name="Legaspi R."/>
            <person name="Madden M."/>
            <person name="Maduro Q.L."/>
            <person name="Maduro V.B."/>
            <person name="Margulies E.H."/>
            <person name="Masiello C."/>
            <person name="Maskeri B."/>
            <person name="McDowell J."/>
            <person name="Mojidi H.A."/>
            <person name="Mullikin J.C."/>
            <person name="Oestreicher J.S."/>
            <person name="Park M."/>
            <person name="Portnoy M.E."/>
            <person name="Prasad A."/>
            <person name="Puri O."/>
            <person name="Reddix-Dugue N."/>
            <person name="Schandler K."/>
            <person name="Schueler M.G."/>
            <person name="Sison C."/>
            <person name="Stantripop S."/>
            <person name="Stephen E."/>
            <person name="Taye A."/>
            <person name="Thomas J.W."/>
            <person name="Thomas P.J."/>
            <person name="Tsipouri V."/>
            <person name="Ung L."/>
            <person name="Vogt J.L."/>
            <person name="Wetherby K.D."/>
            <person name="Young A."/>
            <person name="Green E.D."/>
        </authorList>
    </citation>
    <scope>NUCLEOTIDE SEQUENCE [LARGE SCALE GENOMIC DNA]</scope>
</reference>
<proteinExistence type="inferred from homology"/>
<dbReference type="EMBL" id="DP000024">
    <property type="protein sequence ID" value="ABC87433.1"/>
    <property type="molecule type" value="Genomic_DNA"/>
</dbReference>
<dbReference type="SMR" id="Q2IBG9"/>
<dbReference type="GO" id="GO:0005901">
    <property type="term" value="C:caveola"/>
    <property type="evidence" value="ECO:0000250"/>
    <property type="project" value="UniProtKB"/>
</dbReference>
<dbReference type="GO" id="GO:0031410">
    <property type="term" value="C:cytoplasmic vesicle"/>
    <property type="evidence" value="ECO:0007669"/>
    <property type="project" value="TreeGrafter"/>
</dbReference>
<dbReference type="GO" id="GO:0005925">
    <property type="term" value="C:focal adhesion"/>
    <property type="evidence" value="ECO:0007669"/>
    <property type="project" value="TreeGrafter"/>
</dbReference>
<dbReference type="GO" id="GO:0000139">
    <property type="term" value="C:Golgi membrane"/>
    <property type="evidence" value="ECO:0007669"/>
    <property type="project" value="UniProtKB-SubCell"/>
</dbReference>
<dbReference type="GO" id="GO:0005634">
    <property type="term" value="C:nucleus"/>
    <property type="evidence" value="ECO:0007669"/>
    <property type="project" value="UniProtKB-SubCell"/>
</dbReference>
<dbReference type="GO" id="GO:0048471">
    <property type="term" value="C:perinuclear region of cytoplasm"/>
    <property type="evidence" value="ECO:0000250"/>
    <property type="project" value="UniProtKB"/>
</dbReference>
<dbReference type="GO" id="GO:0044853">
    <property type="term" value="C:plasma membrane raft"/>
    <property type="evidence" value="ECO:0000250"/>
    <property type="project" value="UniProtKB"/>
</dbReference>
<dbReference type="GO" id="GO:0042383">
    <property type="term" value="C:sarcolemma"/>
    <property type="evidence" value="ECO:0007669"/>
    <property type="project" value="TreeGrafter"/>
</dbReference>
<dbReference type="GO" id="GO:0031748">
    <property type="term" value="F:D1 dopamine receptor binding"/>
    <property type="evidence" value="ECO:0000250"/>
    <property type="project" value="UniProtKB"/>
</dbReference>
<dbReference type="GO" id="GO:0060090">
    <property type="term" value="F:molecular adaptor activity"/>
    <property type="evidence" value="ECO:0007669"/>
    <property type="project" value="TreeGrafter"/>
</dbReference>
<dbReference type="GO" id="GO:0019901">
    <property type="term" value="F:protein kinase binding"/>
    <property type="evidence" value="ECO:0007669"/>
    <property type="project" value="TreeGrafter"/>
</dbReference>
<dbReference type="GO" id="GO:0070836">
    <property type="term" value="P:caveola assembly"/>
    <property type="evidence" value="ECO:0000250"/>
    <property type="project" value="UniProtKB"/>
</dbReference>
<dbReference type="GO" id="GO:0007029">
    <property type="term" value="P:endoplasmic reticulum organization"/>
    <property type="evidence" value="ECO:0000250"/>
    <property type="project" value="UniProtKB"/>
</dbReference>
<dbReference type="GO" id="GO:0008286">
    <property type="term" value="P:insulin receptor signaling pathway"/>
    <property type="evidence" value="ECO:0007669"/>
    <property type="project" value="TreeGrafter"/>
</dbReference>
<dbReference type="GO" id="GO:0007005">
    <property type="term" value="P:mitochondrion organization"/>
    <property type="evidence" value="ECO:0000250"/>
    <property type="project" value="UniProtKB"/>
</dbReference>
<dbReference type="GO" id="GO:0001937">
    <property type="term" value="P:negative regulation of endothelial cell proliferation"/>
    <property type="evidence" value="ECO:0000250"/>
    <property type="project" value="UniProtKB"/>
</dbReference>
<dbReference type="GO" id="GO:0060161">
    <property type="term" value="P:positive regulation of dopamine receptor signaling pathway"/>
    <property type="evidence" value="ECO:0000250"/>
    <property type="project" value="UniProtKB"/>
</dbReference>
<dbReference type="GO" id="GO:0051480">
    <property type="term" value="P:regulation of cytosolic calcium ion concentration"/>
    <property type="evidence" value="ECO:0007669"/>
    <property type="project" value="TreeGrafter"/>
</dbReference>
<dbReference type="GO" id="GO:0048741">
    <property type="term" value="P:skeletal muscle fiber development"/>
    <property type="evidence" value="ECO:0000250"/>
    <property type="project" value="UniProtKB"/>
</dbReference>
<dbReference type="GO" id="GO:0048278">
    <property type="term" value="P:vesicle docking"/>
    <property type="evidence" value="ECO:0000250"/>
    <property type="project" value="UniProtKB"/>
</dbReference>
<dbReference type="GO" id="GO:0006906">
    <property type="term" value="P:vesicle fusion"/>
    <property type="evidence" value="ECO:0000250"/>
    <property type="project" value="UniProtKB"/>
</dbReference>
<dbReference type="InterPro" id="IPR001612">
    <property type="entry name" value="Caveolin"/>
</dbReference>
<dbReference type="InterPro" id="IPR018361">
    <property type="entry name" value="Caveolin_CS"/>
</dbReference>
<dbReference type="PANTHER" id="PTHR10844">
    <property type="entry name" value="CAVEOLIN"/>
    <property type="match status" value="1"/>
</dbReference>
<dbReference type="PANTHER" id="PTHR10844:SF3">
    <property type="entry name" value="CAVEOLIN-2"/>
    <property type="match status" value="1"/>
</dbReference>
<dbReference type="Pfam" id="PF01146">
    <property type="entry name" value="Caveolin"/>
    <property type="match status" value="1"/>
</dbReference>
<dbReference type="PROSITE" id="PS01210">
    <property type="entry name" value="CAVEOLIN"/>
    <property type="match status" value="1"/>
</dbReference>
<sequence length="162" mass="18129">MGLETEKADVQLFLDDDSYSHHGDVDYADPEKFADSGHDRDPHRLNSHLKVGFEDVIAEPMTTHSCDKVWICSHALFEISKYVMYKFLTVFLAIPLAFAAGILFATLSCLHIWIIMPFVKTCLMVLPSVQTIWKSVTDVIIAPLCTSVGRSLSSISLQLSHD</sequence>
<comment type="function">
    <text evidence="1">May act as a scaffolding protein within caveolar membranes. Interacts directly with G-protein alpha subunits and can functionally regulate their activity. Acts as an accessory protein in conjunction with CAV1 in targeting to lipid rafts and driving caveolae formation. The Ser-36 phosphorylated form has a role in modulating mitosis in endothelial cells. Positive regulator of cellular mitogenesis of the MAPK signaling pathway. Required for the insulin-stimulated nuclear translocation and activation of MAPK1 and STAT3, and the subsequent regulation of cell cycle progression (By similarity).</text>
</comment>
<comment type="subunit">
    <text evidence="1">Monomer or homodimer (By similarity). Interacts with CAV1; the interaction forms a stable heterooligomeric complex that is required for targeting to lipid rafts and for caveolae formation. Tyrosine phosphorylated forms do not form heterooligomers with the Tyr-19-phosphorylated form existing as a monomer or dimer, and the Tyr-27-form as a monomer only. Interacts (tyrosine phosphorylated form) with the SH2 domain-containing proteins, RASA1, NCK1 and SRC. Interacts (tyrosine phosphorylated form) with INSR, the interaction (Tyr-27-phosphorylated form) is increased on insulin stimulation. Interacts (Tyr-19 phosphorylated form) with MAPK1 (phosphorylated form); the interaction, promoted by insulin, leads to nuclear location and MAPK1 activation. Interacts with STAT3; the interaction is increased on insulin-induced tyrosine phosphorylation leading to STAT activation (By similarity).</text>
</comment>
<comment type="subcellular location">
    <subcellularLocation>
        <location evidence="1">Nucleus</location>
    </subcellularLocation>
    <subcellularLocation>
        <location evidence="1">Cytoplasm</location>
    </subcellularLocation>
    <subcellularLocation>
        <location>Golgi apparatus membrane</location>
        <topology>Peripheral membrane protein</topology>
    </subcellularLocation>
    <subcellularLocation>
        <location>Cell membrane</location>
        <topology>Peripheral membrane protein</topology>
    </subcellularLocation>
    <subcellularLocation>
        <location>Membrane</location>
        <location>Caveola</location>
        <topology>Peripheral membrane protein</topology>
    </subcellularLocation>
    <text evidence="1">Potential hairpin-like structure in the membrane. Membrane protein of caveolae. Tyr-19-phosphorylated form is enriched at sites of cell-cell contact and is translocated to the nucleus in complex with MAPK1 in response to insulin. Tyr-27-phosphorylated form is located both in the cytoplasm and plasma membrane. Ser-36-phosphorylated form resides in intracellular compartments (By similarity).</text>
</comment>
<comment type="PTM">
    <text evidence="1">Phosphorylated on serine and tyrosine residues. Phosphorylation on Ser-36 appears to modulate mitosis in endothelial cells. Phosphorylation on both Tyr-19 and Tyr-27 is required for insulin-induced 'Ser-727' phosphorylation of STAT3 and its activation. Phosphorylation on Tyr-19 is required for insulin-induced phosphorylation of MAPK1 and DNA binding of STAT3. Tyrosine phosphorylation is induced by both EGF and insulin (By similarity).</text>
</comment>
<comment type="similarity">
    <text evidence="5">Belongs to the caveolin family.</text>
</comment>
<accession>Q2IBG9</accession>
<keyword id="KW-1003">Cell membrane</keyword>
<keyword id="KW-0963">Cytoplasm</keyword>
<keyword id="KW-0333">Golgi apparatus</keyword>
<keyword id="KW-0472">Membrane</keyword>
<keyword id="KW-0539">Nucleus</keyword>
<keyword id="KW-0597">Phosphoprotein</keyword>
<name>CAV2_EULMM</name>
<gene>
    <name type="primary">CAV2</name>
</gene>
<feature type="chain" id="PRO_0000251907" description="Caveolin-2">
    <location>
        <begin position="1"/>
        <end position="162"/>
    </location>
</feature>
<feature type="topological domain" description="Cytoplasmic" evidence="4">
    <location>
        <begin position="1"/>
        <end position="86"/>
    </location>
</feature>
<feature type="intramembrane region" description="Helical" evidence="4">
    <location>
        <begin position="87"/>
        <end position="107"/>
    </location>
</feature>
<feature type="topological domain" description="Cytoplasmic" evidence="4">
    <location>
        <begin position="108"/>
        <end position="162"/>
    </location>
</feature>
<feature type="modified residue" description="Phosphotyrosine; by SRC" evidence="2">
    <location>
        <position position="19"/>
    </location>
</feature>
<feature type="modified residue" description="Phosphoserine" evidence="3">
    <location>
        <position position="20"/>
    </location>
</feature>
<feature type="modified residue" description="Phosphotyrosine; by SRC" evidence="2">
    <location>
        <position position="27"/>
    </location>
</feature>
<feature type="modified residue" description="Phosphoserine" evidence="2">
    <location>
        <position position="36"/>
    </location>
</feature>